<sequence>MGKVGAGDGSSAGLSALLAGAGLLMLLAPGVCSSLSCCPPQHPSSTPRRTLTPRGFPHPGPLGRAPATPPPLFMRPLFAVAPGDRALFLERAGGSRVSVATAARSGRRRRSGTEPEKIEPGEGASRSRRDMLKDGGQQGLGTGARDPGKATRFRMEELRLTSTTFALTGDSAHNQAMVHWSGHNSSVILILTKLYDYNLGSITESSLWRSTDYGTTYEKLNDKVGLKTILSYLYVCPTNKCKIMLLTDPEIESSLLISSDEGATYQKYRLNFYLQSLLFHPKQEDWILAYSQDQKLYSSAEFGRRWQLIQESVVPNRFYWSVMGSSKEPDLVHLEARTVDGHSIYLTCRMQNCTEANRNKPFPGYIDPDSLIVQDDYVFVQLTSGGRPHYYVSYRRSPFAQMKLPKYALPKDMHVISTDENQVFAAVQEWNQNDTYNLYISDTRGVYFTLALENVRSSRGPEGNVMIDLYEVAGIKGMFLANKKIDNQVKTFITYNKGRDWRLLQAPDADLRGDPVHCLLPYCSLHLHLKVSENPYTSGIIASRDTAPSIIVASGNIGSELSDSDISMFVSSDAGNTWRQIFEEEHSILYLDQGGVLVAMKHTSLPIRHLWLSFDEGRSWSKYSFTSIPLFVDGVLGEPGEETLIMTVFGHFSHRSEWQLVKVDYKSIFDRRCAEEDYRPWQLHSQGEACIMGAKRIYKKRKSERKCMQKYAGAMESEPCVCTEADFDCDYGYERHSNGQCLPAFWFNPSSLSKDCSLGQSYLNSAGYRKVVSNNCTDGVREQYTAKPQKCPGKAPRGLRIVTADGKLTAEQGHNVTLMVQLEEGDVQRTLIQVDFGDGIAVSYVNLSSMEDGIKHVYQNVGIFRVTVQVDNSLGSDSAVLYLHVTCPLEHVHLSLPFVTTKNKEVNATAVLWPSQVGTLTYVWWYGNNTEPLITLEGSISFKFTSEGMNTITVQVSAGNAILQDTKTIAVYEEFRSLRLAFSPNLDDYNPDIPEWRRDISRVIKKSLVEATGIPSQHILVAVLPGLPTAAELFVLPYQDGTRENKRSPEDLEQISEVLIHKLNQNLVHFELKPGVQVLVHAAHLTAAPLVDLTPTHSGSAMLMLLSVVFVGLAVFVIYKFKRRVALPSPPSPSAQPGDSSLRLQRPRPATPPSSPKRGSAGAQFAI</sequence>
<organism>
    <name type="scientific">Mus musculus</name>
    <name type="common">Mouse</name>
    <dbReference type="NCBI Taxonomy" id="10090"/>
    <lineage>
        <taxon>Eukaryota</taxon>
        <taxon>Metazoa</taxon>
        <taxon>Chordata</taxon>
        <taxon>Craniata</taxon>
        <taxon>Vertebrata</taxon>
        <taxon>Euteleostomi</taxon>
        <taxon>Mammalia</taxon>
        <taxon>Eutheria</taxon>
        <taxon>Euarchontoglires</taxon>
        <taxon>Glires</taxon>
        <taxon>Rodentia</taxon>
        <taxon>Myomorpha</taxon>
        <taxon>Muroidea</taxon>
        <taxon>Muridae</taxon>
        <taxon>Murinae</taxon>
        <taxon>Mus</taxon>
        <taxon>Mus</taxon>
    </lineage>
</organism>
<proteinExistence type="evidence at protein level"/>
<evidence type="ECO:0000255" key="1"/>
<evidence type="ECO:0000255" key="2">
    <source>
        <dbReference type="PROSITE-ProRule" id="PRU00151"/>
    </source>
</evidence>
<evidence type="ECO:0000256" key="3">
    <source>
        <dbReference type="SAM" id="MobiDB-lite"/>
    </source>
</evidence>
<evidence type="ECO:0000303" key="4">
    <source>
    </source>
</evidence>
<evidence type="ECO:0000303" key="5">
    <source>
    </source>
</evidence>
<evidence type="ECO:0000303" key="6">
    <source ref="3"/>
</evidence>
<evidence type="ECO:0000305" key="7"/>
<comment type="interaction">
    <interactant intactId="EBI-25300487">
        <id>Q9JLC4</id>
    </interactant>
    <interactant intactId="EBI-1057058">
        <id>Q99523</id>
        <label>SORT1</label>
    </interactant>
    <organismsDiffer>true</organismsDiffer>
    <experiments>2</experiments>
</comment>
<comment type="subcellular location">
    <subcellularLocation>
        <location>Membrane</location>
        <topology>Single-pass type I membrane protein</topology>
    </subcellularLocation>
</comment>
<comment type="alternative products">
    <event type="alternative splicing"/>
    <isoform>
        <id>Q9JLC4-1</id>
        <name>1</name>
        <name>SorCSb</name>
        <sequence type="displayed"/>
    </isoform>
    <isoform>
        <id>Q9JLC4-2</id>
        <name>2</name>
        <name>SorCSa</name>
        <sequence type="described" ref="VSP_006205"/>
    </isoform>
    <isoform>
        <id>Q9JLC4-3</id>
        <name>3</name>
        <name>SorCSc</name>
        <sequence type="described" ref="VSP_006206"/>
    </isoform>
    <isoform>
        <id>Q9JLC4-4</id>
        <name>4</name>
        <sequence type="described" ref="VSP_006207"/>
    </isoform>
</comment>
<comment type="tissue specificity">
    <text>Isoform 1 is highly expressed in brain, and at lower levels in heart, liver and kidney. Detected in newborn brain and in adult olfactory bulb and cerebral cortex. Isoform 2 is highly expressed in liver, and at lower levels in heart, brain, kidney and testis.</text>
</comment>
<comment type="similarity">
    <text evidence="7">Belongs to the VPS10-related sortilin family. SORCS subfamily.</text>
</comment>
<comment type="sequence caution" evidence="7">
    <conflict type="frameshift">
        <sequence resource="EMBL-CDS" id="AAH07486"/>
    </conflict>
</comment>
<name>SORC1_MOUSE</name>
<dbReference type="EMBL" id="AF137367">
    <property type="protein sequence ID" value="AAF24748.1"/>
    <property type="molecule type" value="mRNA"/>
</dbReference>
<dbReference type="EMBL" id="AF195056">
    <property type="protein sequence ID" value="AAF68196.1"/>
    <property type="molecule type" value="mRNA"/>
</dbReference>
<dbReference type="EMBL" id="AF284755">
    <property type="protein sequence ID" value="AAL56666.1"/>
    <property type="molecule type" value="mRNA"/>
</dbReference>
<dbReference type="EMBL" id="BC007486">
    <property type="protein sequence ID" value="AAH07486.1"/>
    <property type="status" value="ALT_FRAME"/>
    <property type="molecule type" value="mRNA"/>
</dbReference>
<dbReference type="SMR" id="Q9JLC4"/>
<dbReference type="FunCoup" id="Q9JLC4">
    <property type="interactions" value="191"/>
</dbReference>
<dbReference type="IntAct" id="Q9JLC4">
    <property type="interactions" value="1"/>
</dbReference>
<dbReference type="STRING" id="10090.ENSMUSP00000147463"/>
<dbReference type="GlyConnect" id="2823">
    <property type="glycosylation" value="5 N-Linked glycans (2 sites)"/>
</dbReference>
<dbReference type="GlyCosmos" id="Q9JLC4">
    <property type="glycosylation" value="9 sites, 5 glycans"/>
</dbReference>
<dbReference type="GlyGen" id="Q9JLC4">
    <property type="glycosylation" value="11 sites, 8 N-linked glycans (4 sites), 1 O-linked glycan (1 site)"/>
</dbReference>
<dbReference type="iPTMnet" id="Q9JLC4"/>
<dbReference type="PhosphoSitePlus" id="Q9JLC4"/>
<dbReference type="PaxDb" id="10090-ENSMUSP00000072472"/>
<dbReference type="ProteomicsDB" id="261604">
    <molecule id="Q9JLC4-1"/>
</dbReference>
<dbReference type="ProteomicsDB" id="261605">
    <molecule id="Q9JLC4-2"/>
</dbReference>
<dbReference type="ProteomicsDB" id="261606">
    <molecule id="Q9JLC4-3"/>
</dbReference>
<dbReference type="ProteomicsDB" id="261607">
    <molecule id="Q9JLC4-4"/>
</dbReference>
<dbReference type="AGR" id="MGI:1929666"/>
<dbReference type="MGI" id="MGI:1929666">
    <property type="gene designation" value="Sorcs1"/>
</dbReference>
<dbReference type="eggNOG" id="KOG3511">
    <property type="taxonomic scope" value="Eukaryota"/>
</dbReference>
<dbReference type="InParanoid" id="Q9JLC4"/>
<dbReference type="PhylomeDB" id="Q9JLC4"/>
<dbReference type="ChiTaRS" id="Sorcs1">
    <property type="organism name" value="mouse"/>
</dbReference>
<dbReference type="PRO" id="PR:Q9JLC4"/>
<dbReference type="Proteomes" id="UP000000589">
    <property type="component" value="Unplaced"/>
</dbReference>
<dbReference type="RNAct" id="Q9JLC4">
    <property type="molecule type" value="protein"/>
</dbReference>
<dbReference type="GO" id="GO:0016020">
    <property type="term" value="C:membrane"/>
    <property type="evidence" value="ECO:0007669"/>
    <property type="project" value="UniProtKB-SubCell"/>
</dbReference>
<dbReference type="FunFam" id="3.30.60.270:FF:000001">
    <property type="entry name" value="Sortilin related VPS10 domain containing receptor 1"/>
    <property type="match status" value="1"/>
</dbReference>
<dbReference type="FunFam" id="2.60.40.10:FF:000083">
    <property type="entry name" value="Sortilin-related VPS10 domain containing receptor 2"/>
    <property type="match status" value="1"/>
</dbReference>
<dbReference type="FunFam" id="2.10.70.80:FF:000001">
    <property type="entry name" value="Sortilin-related VPS10 domain-containing receptor 1"/>
    <property type="match status" value="1"/>
</dbReference>
<dbReference type="FunFam" id="2.130.10.10:FF:000198">
    <property type="entry name" value="VPS10 domain-containing receptor SorCS1 isoform X2"/>
    <property type="match status" value="1"/>
</dbReference>
<dbReference type="Gene3D" id="2.10.70.80">
    <property type="match status" value="1"/>
</dbReference>
<dbReference type="Gene3D" id="2.120.10.10">
    <property type="match status" value="1"/>
</dbReference>
<dbReference type="Gene3D" id="3.30.60.270">
    <property type="match status" value="1"/>
</dbReference>
<dbReference type="Gene3D" id="2.60.40.10">
    <property type="entry name" value="Immunoglobulins"/>
    <property type="match status" value="1"/>
</dbReference>
<dbReference type="Gene3D" id="2.130.10.10">
    <property type="entry name" value="YVTN repeat-like/Quinoprotein amine dehydrogenase"/>
    <property type="match status" value="1"/>
</dbReference>
<dbReference type="InterPro" id="IPR013783">
    <property type="entry name" value="Ig-like_fold"/>
</dbReference>
<dbReference type="InterPro" id="IPR000601">
    <property type="entry name" value="PKD_dom"/>
</dbReference>
<dbReference type="InterPro" id="IPR035986">
    <property type="entry name" value="PKD_dom_sf"/>
</dbReference>
<dbReference type="InterPro" id="IPR031777">
    <property type="entry name" value="Sortilin_C"/>
</dbReference>
<dbReference type="InterPro" id="IPR031778">
    <property type="entry name" value="Sortilin_N"/>
</dbReference>
<dbReference type="InterPro" id="IPR006581">
    <property type="entry name" value="VPS10"/>
</dbReference>
<dbReference type="InterPro" id="IPR050310">
    <property type="entry name" value="VPS10-sortilin"/>
</dbReference>
<dbReference type="InterPro" id="IPR015943">
    <property type="entry name" value="WD40/YVTN_repeat-like_dom_sf"/>
</dbReference>
<dbReference type="PANTHER" id="PTHR12106">
    <property type="entry name" value="SORTILIN RELATED"/>
    <property type="match status" value="1"/>
</dbReference>
<dbReference type="PANTHER" id="PTHR12106:SF8">
    <property type="entry name" value="VPS10 DOMAIN-CONTAINING RECEPTOR SORCS1"/>
    <property type="match status" value="1"/>
</dbReference>
<dbReference type="Pfam" id="PF00801">
    <property type="entry name" value="PKD"/>
    <property type="match status" value="1"/>
</dbReference>
<dbReference type="Pfam" id="PF15902">
    <property type="entry name" value="Sortilin-Vps10"/>
    <property type="match status" value="1"/>
</dbReference>
<dbReference type="Pfam" id="PF15901">
    <property type="entry name" value="Sortilin_C"/>
    <property type="match status" value="1"/>
</dbReference>
<dbReference type="SMART" id="SM00602">
    <property type="entry name" value="VPS10"/>
    <property type="match status" value="1"/>
</dbReference>
<dbReference type="SUPFAM" id="SSF110296">
    <property type="entry name" value="Oligoxyloglucan reducing end-specific cellobiohydrolase"/>
    <property type="match status" value="1"/>
</dbReference>
<dbReference type="SUPFAM" id="SSF49299">
    <property type="entry name" value="PKD domain"/>
    <property type="match status" value="2"/>
</dbReference>
<dbReference type="PROSITE" id="PS50093">
    <property type="entry name" value="PKD"/>
    <property type="match status" value="1"/>
</dbReference>
<protein>
    <recommendedName>
        <fullName>VPS10 domain-containing receptor SorCS1</fullName>
        <shortName>mSorCS</shortName>
    </recommendedName>
</protein>
<gene>
    <name type="primary">Sorcs1</name>
    <name type="synonym">Sorcs</name>
</gene>
<accession>Q9JLC4</accession>
<accession>Q8VI45</accession>
<accession>Q922I1</accession>
<accession>Q9QY21</accession>
<reference key="1">
    <citation type="journal article" date="1999" name="Biochem. Biophys. Res. Commun.">
        <title>Identification and characterization of SorCS, a third member of a novel receptor family.</title>
        <authorList>
            <person name="Hermey G."/>
            <person name="Riedel I.B."/>
            <person name="Hampe W."/>
            <person name="Schaller H.C."/>
            <person name="Hermans-Borgmeyer I."/>
        </authorList>
    </citation>
    <scope>NUCLEOTIDE SEQUENCE [MRNA] (ISOFORM 2)</scope>
    <source>
        <strain>C57BL/6J</strain>
        <tissue>Brain</tissue>
    </source>
</reference>
<reference key="2">
    <citation type="journal article" date="2000" name="Biochim. Biophys. Acta">
        <title>Alternative splicing of murine SorCS leads to two forms of the receptor that differ completely in their cytoplasmic tails.</title>
        <authorList>
            <person name="Hermey G."/>
            <person name="Schaller H.C."/>
        </authorList>
    </citation>
    <scope>NUCLEOTIDE SEQUENCE [MRNA] (ISOFORM 1)</scope>
    <source>
        <strain>C57BL/6J</strain>
        <tissue>Brain</tissue>
    </source>
</reference>
<reference key="3">
    <citation type="submission" date="2000-07" db="EMBL/GenBank/DDBJ databases">
        <title>A third splice variant of mSorCS.</title>
        <authorList>
            <person name="Hermey G."/>
        </authorList>
    </citation>
    <scope>NUCLEOTIDE SEQUENCE [MRNA] (ISOFORM 3)</scope>
    <source>
        <strain>C57BL/6J</strain>
    </source>
</reference>
<reference key="4">
    <citation type="journal article" date="2004" name="Genome Res.">
        <title>The status, quality, and expansion of the NIH full-length cDNA project: the Mammalian Gene Collection (MGC).</title>
        <authorList>
            <consortium name="The MGC Project Team"/>
        </authorList>
    </citation>
    <scope>NUCLEOTIDE SEQUENCE [LARGE SCALE MRNA] OF 424-1167 (ISOFORM 4)</scope>
</reference>
<reference key="5">
    <citation type="journal article" date="2010" name="Cell">
        <title>A tissue-specific atlas of mouse protein phosphorylation and expression.</title>
        <authorList>
            <person name="Huttlin E.L."/>
            <person name="Jedrychowski M.P."/>
            <person name="Elias J.E."/>
            <person name="Goswami T."/>
            <person name="Rad R."/>
            <person name="Beausoleil S.A."/>
            <person name="Villen J."/>
            <person name="Haas W."/>
            <person name="Sowa M.E."/>
            <person name="Gygi S.P."/>
        </authorList>
    </citation>
    <scope>IDENTIFICATION BY MASS SPECTROMETRY [LARGE SCALE ANALYSIS]</scope>
    <source>
        <tissue>Brain</tissue>
    </source>
</reference>
<feature type="signal peptide" evidence="1">
    <location>
        <begin position="1"/>
        <end position="33"/>
    </location>
</feature>
<feature type="chain" id="PRO_0000033171" description="VPS10 domain-containing receptor SorCS1">
    <location>
        <begin position="34"/>
        <end position="1167"/>
    </location>
</feature>
<feature type="topological domain" description="Lumenal" evidence="1">
    <location>
        <begin position="34"/>
        <end position="1098"/>
    </location>
</feature>
<feature type="transmembrane region" description="Helical" evidence="1">
    <location>
        <begin position="1099"/>
        <end position="1119"/>
    </location>
</feature>
<feature type="topological domain" description="Cytoplasmic" evidence="1">
    <location>
        <begin position="1120"/>
        <end position="1167"/>
    </location>
</feature>
<feature type="repeat" description="BNR 1">
    <location>
        <begin position="208"/>
        <end position="219"/>
    </location>
</feature>
<feature type="repeat" description="BNR 2">
    <location>
        <begin position="256"/>
        <end position="267"/>
    </location>
</feature>
<feature type="repeat" description="BNR 3">
    <location>
        <begin position="492"/>
        <end position="503"/>
    </location>
</feature>
<feature type="repeat" description="BNR 4">
    <location>
        <begin position="569"/>
        <end position="580"/>
    </location>
</feature>
<feature type="repeat" description="BNR 5">
    <location>
        <begin position="611"/>
        <end position="622"/>
    </location>
</feature>
<feature type="domain" description="PKD" evidence="2">
    <location>
        <begin position="802"/>
        <end position="893"/>
    </location>
</feature>
<feature type="region of interest" description="Disordered" evidence="3">
    <location>
        <begin position="38"/>
        <end position="68"/>
    </location>
</feature>
<feature type="region of interest" description="Disordered" evidence="3">
    <location>
        <begin position="98"/>
        <end position="151"/>
    </location>
</feature>
<feature type="region of interest" description="Disordered" evidence="3">
    <location>
        <begin position="1128"/>
        <end position="1167"/>
    </location>
</feature>
<feature type="compositionally biased region" description="Basic and acidic residues" evidence="3">
    <location>
        <begin position="111"/>
        <end position="133"/>
    </location>
</feature>
<feature type="glycosylation site" description="N-linked (GlcNAc...) asparagine" evidence="1">
    <location>
        <position position="184"/>
    </location>
</feature>
<feature type="glycosylation site" description="N-linked (GlcNAc...) asparagine" evidence="1">
    <location>
        <position position="352"/>
    </location>
</feature>
<feature type="glycosylation site" description="N-linked (GlcNAc...) asparagine" evidence="1">
    <location>
        <position position="433"/>
    </location>
</feature>
<feature type="glycosylation site" description="N-linked (GlcNAc...) asparagine" evidence="1">
    <location>
        <position position="775"/>
    </location>
</feature>
<feature type="glycosylation site" description="N-linked (GlcNAc...) asparagine" evidence="1">
    <location>
        <position position="815"/>
    </location>
</feature>
<feature type="glycosylation site" description="N-linked (GlcNAc...) asparagine" evidence="1">
    <location>
        <position position="846"/>
    </location>
</feature>
<feature type="glycosylation site" description="N-linked (GlcNAc...) asparagine" evidence="1">
    <location>
        <position position="907"/>
    </location>
</feature>
<feature type="glycosylation site" description="N-linked (GlcNAc...) asparagine" evidence="1">
    <location>
        <position position="928"/>
    </location>
</feature>
<feature type="splice variant" id="VSP_006205" description="In isoform 2." evidence="4">
    <original>RVALPSPPSPSAQPGDSSLRLQRPRPATPPSSPKRGSAGAQFAI</original>
    <variation>CVFLLLPSYPRPPPPSSFCQVQKQ</variation>
    <location>
        <begin position="1124"/>
        <end position="1167"/>
    </location>
</feature>
<feature type="splice variant" id="VSP_006206" description="In isoform 3." evidence="6">
    <original>RVALPSPPSPSAQPGDSSLRLQRPRPATPPSSPKRGSAGAQFAI</original>
    <variation>KIPGINVYAQMQNEKEQELINPVSHSESRPSVPHPDLRRPGQLVDEKVESQLLGK</variation>
    <location>
        <begin position="1124"/>
        <end position="1167"/>
    </location>
</feature>
<feature type="splice variant" id="VSP_006207" description="In isoform 4." evidence="5">
    <original>RVALPSPPSPSAQPGDSSLRLQRPRPATPPSSPKRGSAGAQFAI</original>
    <variation>KIPGINVYAQMQNEKEQELINPVSHSESRSSVPHPDLRRPGQLVDEKVESQLLGE</variation>
    <location>
        <begin position="1124"/>
        <end position="1167"/>
    </location>
</feature>
<feature type="sequence conflict" description="In Ref. 1; AAF24748." evidence="7" ref="1">
    <original>S</original>
    <variation>Y</variation>
    <location>
        <position position="10"/>
    </location>
</feature>
<feature type="sequence conflict" description="In Ref. 4; AAH07486." evidence="7" ref="4">
    <original>Q</original>
    <variation>QG</variation>
    <location>
        <position position="709"/>
    </location>
</feature>
<feature type="sequence conflict" description="In Ref. 4; AAH07486." evidence="7" ref="4">
    <original>A</original>
    <variation>T</variation>
    <location>
        <position position="766"/>
    </location>
</feature>
<keyword id="KW-0025">Alternative splicing</keyword>
<keyword id="KW-0325">Glycoprotein</keyword>
<keyword id="KW-0472">Membrane</keyword>
<keyword id="KW-1185">Reference proteome</keyword>
<keyword id="KW-0677">Repeat</keyword>
<keyword id="KW-0732">Signal</keyword>
<keyword id="KW-0812">Transmembrane</keyword>
<keyword id="KW-1133">Transmembrane helix</keyword>